<protein>
    <recommendedName>
        <fullName>Glycylpeptide N-tetradecanoyltransferase</fullName>
        <ecNumber>2.3.1.97</ecNumber>
    </recommendedName>
    <alternativeName>
        <fullName>Myristoyl-CoA:protein N-myristoyltransferase</fullName>
        <shortName>NMT</shortName>
    </alternativeName>
    <alternativeName>
        <fullName>Peptide N-myristoyltransferase</fullName>
    </alternativeName>
</protein>
<accession>Q7S3C8</accession>
<accession>V5ILB4</accession>
<feature type="chain" id="PRO_0000064244" description="Glycylpeptide N-tetradecanoyltransferase">
    <location>
        <begin position="1"/>
        <end position="569"/>
    </location>
</feature>
<feature type="region of interest" description="Disordered" evidence="3">
    <location>
        <begin position="1"/>
        <end position="82"/>
    </location>
</feature>
<feature type="compositionally biased region" description="Basic and acidic residues" evidence="3">
    <location>
        <begin position="1"/>
        <end position="18"/>
    </location>
</feature>
<feature type="compositionally biased region" description="Basic residues" evidence="3">
    <location>
        <begin position="55"/>
        <end position="68"/>
    </location>
</feature>
<feature type="active site" description="Proton acceptor; via carboxylate" evidence="1">
    <location>
        <position position="569"/>
    </location>
</feature>
<feature type="binding site" evidence="2">
    <location>
        <begin position="158"/>
        <end position="161"/>
    </location>
    <ligand>
        <name>tetradecanoyl-CoA</name>
        <dbReference type="ChEBI" id="CHEBI:57385"/>
    </ligand>
</feature>
<feature type="binding site" evidence="2">
    <location>
        <begin position="291"/>
        <end position="293"/>
    </location>
    <ligand>
        <name>tetradecanoyl-CoA</name>
        <dbReference type="ChEBI" id="CHEBI:57385"/>
    </ligand>
</feature>
<feature type="binding site" evidence="2">
    <location>
        <begin position="299"/>
        <end position="303"/>
    </location>
    <ligand>
        <name>tetradecanoyl-CoA</name>
        <dbReference type="ChEBI" id="CHEBI:57385"/>
    </ligand>
</feature>
<gene>
    <name type="primary">gtt-1</name>
    <name type="synonym">nmt1</name>
    <name type="ORF">NCU06925</name>
</gene>
<organism>
    <name type="scientific">Neurospora crassa (strain ATCC 24698 / 74-OR23-1A / CBS 708.71 / DSM 1257 / FGSC 987)</name>
    <dbReference type="NCBI Taxonomy" id="367110"/>
    <lineage>
        <taxon>Eukaryota</taxon>
        <taxon>Fungi</taxon>
        <taxon>Dikarya</taxon>
        <taxon>Ascomycota</taxon>
        <taxon>Pezizomycotina</taxon>
        <taxon>Sordariomycetes</taxon>
        <taxon>Sordariomycetidae</taxon>
        <taxon>Sordariales</taxon>
        <taxon>Sordariaceae</taxon>
        <taxon>Neurospora</taxon>
    </lineage>
</organism>
<dbReference type="EC" id="2.3.1.97"/>
<dbReference type="EMBL" id="CM002242">
    <property type="protein sequence ID" value="ESA41844.1"/>
    <property type="molecule type" value="Genomic_DNA"/>
</dbReference>
<dbReference type="RefSeq" id="XP_011395353.1">
    <property type="nucleotide sequence ID" value="XM_011397051.1"/>
</dbReference>
<dbReference type="SMR" id="Q7S3C8"/>
<dbReference type="FunCoup" id="Q7S3C8">
    <property type="interactions" value="934"/>
</dbReference>
<dbReference type="STRING" id="367110.Q7S3C8"/>
<dbReference type="ESTHER" id="neucr-q7s3c8">
    <property type="family name" value="AlphaBeta_hydrolase"/>
</dbReference>
<dbReference type="PaxDb" id="5141-EFNCRP00000006724"/>
<dbReference type="EnsemblFungi" id="ESA41844">
    <property type="protein sequence ID" value="ESA41844"/>
    <property type="gene ID" value="NCU17177"/>
</dbReference>
<dbReference type="GeneID" id="23569828"/>
<dbReference type="KEGG" id="ncr:NCU17177"/>
<dbReference type="VEuPathDB" id="FungiDB:NCU17177"/>
<dbReference type="HOGENOM" id="CLU_013257_0_0_1"/>
<dbReference type="InParanoid" id="Q7S3C8"/>
<dbReference type="OrthoDB" id="60315at2759"/>
<dbReference type="Proteomes" id="UP000001805">
    <property type="component" value="Chromosome 7, Linkage Group VII"/>
</dbReference>
<dbReference type="GO" id="GO:0005829">
    <property type="term" value="C:cytosol"/>
    <property type="evidence" value="ECO:0000318"/>
    <property type="project" value="GO_Central"/>
</dbReference>
<dbReference type="GO" id="GO:0004379">
    <property type="term" value="F:glycylpeptide N-tetradecanoyltransferase activity"/>
    <property type="evidence" value="ECO:0000318"/>
    <property type="project" value="GO_Central"/>
</dbReference>
<dbReference type="GO" id="GO:0072657">
    <property type="term" value="P:protein localization to membrane"/>
    <property type="evidence" value="ECO:0000318"/>
    <property type="project" value="GO_Central"/>
</dbReference>
<dbReference type="FunFam" id="3.40.630.30:FF:000042">
    <property type="entry name" value="Glycylpeptide N-tetradecanoyltransferase"/>
    <property type="match status" value="1"/>
</dbReference>
<dbReference type="FunFam" id="3.40.630.30:FF:000056">
    <property type="entry name" value="Glycylpeptide N-tetradecanoyltransferase"/>
    <property type="match status" value="1"/>
</dbReference>
<dbReference type="Gene3D" id="3.40.630.30">
    <property type="match status" value="2"/>
</dbReference>
<dbReference type="InterPro" id="IPR016181">
    <property type="entry name" value="Acyl_CoA_acyltransferase"/>
</dbReference>
<dbReference type="InterPro" id="IPR000903">
    <property type="entry name" value="NMT"/>
</dbReference>
<dbReference type="InterPro" id="IPR022677">
    <property type="entry name" value="NMT_C"/>
</dbReference>
<dbReference type="InterPro" id="IPR022678">
    <property type="entry name" value="NMT_CS"/>
</dbReference>
<dbReference type="InterPro" id="IPR022676">
    <property type="entry name" value="NMT_N"/>
</dbReference>
<dbReference type="PANTHER" id="PTHR11377:SF5">
    <property type="entry name" value="GLYCYLPEPTIDE N-TETRADECANOYLTRANSFERASE"/>
    <property type="match status" value="1"/>
</dbReference>
<dbReference type="PANTHER" id="PTHR11377">
    <property type="entry name" value="N-MYRISTOYL TRANSFERASE"/>
    <property type="match status" value="1"/>
</dbReference>
<dbReference type="Pfam" id="PF01233">
    <property type="entry name" value="NMT"/>
    <property type="match status" value="1"/>
</dbReference>
<dbReference type="Pfam" id="PF02799">
    <property type="entry name" value="NMT_C"/>
    <property type="match status" value="1"/>
</dbReference>
<dbReference type="SUPFAM" id="SSF55729">
    <property type="entry name" value="Acyl-CoA N-acyltransferases (Nat)"/>
    <property type="match status" value="2"/>
</dbReference>
<dbReference type="PROSITE" id="PS00975">
    <property type="entry name" value="NMT_1"/>
    <property type="match status" value="1"/>
</dbReference>
<dbReference type="PROSITE" id="PS00976">
    <property type="entry name" value="NMT_2"/>
    <property type="match status" value="1"/>
</dbReference>
<sequence>MPPTEESKPVDPAQEKQAAEALASLKEAQQPAADESGSEDEGADGTAQEAGSGSTKKKNKKKSKKKNKDKSASTESSAEVGLTEALAQADPKSALSGLTPKQIQEFIDLNPALANELLAASGSSGTTDVMEAFKKLKIQDIITGLASSGKNRKDMASYKFWATQPVPQFDEKPAIFEEGPLKIQKVEDIPDEPIPLNLAPFRWVTMDLTDEKQMQEVEKLLYGHFVEDDEAMFRFKYSTSILKWSLMSPGWRKEWHVGIRSGDTLCAFIAAVPTEIRVRDKVIQGSEVNFLCIHKKLRGKRLAPVLIKEITRRINREGIWQAIYTGGIVLPRPVSTCRYYHRALNWQKLYEVGFSPCPSNSKPAFQVRKYALPEQTSTKGLRELQVKDLDAVHSLLERYLKRFDLTPVFNREETEHWLLHKKDSYAEQVIYSYVVEDASGKITDFFSFYLLESTVIRHPKHNSIRAAYMFYYATETAFTEPFDKGALTKRLNDLMADALILAKRHNFDVFNALSLMDNALFLEKQKFGPGDGQLHYYLFNYKANPIHGGVDKKNRLDEDNLSGVGFVMV</sequence>
<name>NMT_NEUCR</name>
<reference key="1">
    <citation type="journal article" date="2003" name="Nature">
        <title>The genome sequence of the filamentous fungus Neurospora crassa.</title>
        <authorList>
            <person name="Galagan J.E."/>
            <person name="Calvo S.E."/>
            <person name="Borkovich K.A."/>
            <person name="Selker E.U."/>
            <person name="Read N.D."/>
            <person name="Jaffe D.B."/>
            <person name="FitzHugh W."/>
            <person name="Ma L.-J."/>
            <person name="Smirnov S."/>
            <person name="Purcell S."/>
            <person name="Rehman B."/>
            <person name="Elkins T."/>
            <person name="Engels R."/>
            <person name="Wang S."/>
            <person name="Nielsen C.B."/>
            <person name="Butler J."/>
            <person name="Endrizzi M."/>
            <person name="Qui D."/>
            <person name="Ianakiev P."/>
            <person name="Bell-Pedersen D."/>
            <person name="Nelson M.A."/>
            <person name="Werner-Washburne M."/>
            <person name="Selitrennikoff C.P."/>
            <person name="Kinsey J.A."/>
            <person name="Braun E.L."/>
            <person name="Zelter A."/>
            <person name="Schulte U."/>
            <person name="Kothe G.O."/>
            <person name="Jedd G."/>
            <person name="Mewes H.-W."/>
            <person name="Staben C."/>
            <person name="Marcotte E."/>
            <person name="Greenberg D."/>
            <person name="Roy A."/>
            <person name="Foley K."/>
            <person name="Naylor J."/>
            <person name="Stange-Thomann N."/>
            <person name="Barrett R."/>
            <person name="Gnerre S."/>
            <person name="Kamal M."/>
            <person name="Kamvysselis M."/>
            <person name="Mauceli E.W."/>
            <person name="Bielke C."/>
            <person name="Rudd S."/>
            <person name="Frishman D."/>
            <person name="Krystofova S."/>
            <person name="Rasmussen C."/>
            <person name="Metzenberg R.L."/>
            <person name="Perkins D.D."/>
            <person name="Kroken S."/>
            <person name="Cogoni C."/>
            <person name="Macino G."/>
            <person name="Catcheside D.E.A."/>
            <person name="Li W."/>
            <person name="Pratt R.J."/>
            <person name="Osmani S.A."/>
            <person name="DeSouza C.P.C."/>
            <person name="Glass N.L."/>
            <person name="Orbach M.J."/>
            <person name="Berglund J.A."/>
            <person name="Voelker R."/>
            <person name="Yarden O."/>
            <person name="Plamann M."/>
            <person name="Seiler S."/>
            <person name="Dunlap J.C."/>
            <person name="Radford A."/>
            <person name="Aramayo R."/>
            <person name="Natvig D.O."/>
            <person name="Alex L.A."/>
            <person name="Mannhaupt G."/>
            <person name="Ebbole D.J."/>
            <person name="Freitag M."/>
            <person name="Paulsen I."/>
            <person name="Sachs M.S."/>
            <person name="Lander E.S."/>
            <person name="Nusbaum C."/>
            <person name="Birren B.W."/>
        </authorList>
    </citation>
    <scope>NUCLEOTIDE SEQUENCE [LARGE SCALE GENOMIC DNA]</scope>
    <source>
        <strain>ATCC 24698 / 74-OR23-1A / CBS 708.71 / DSM 1257 / FGSC 987</strain>
    </source>
</reference>
<evidence type="ECO:0000250" key="1"/>
<evidence type="ECO:0000250" key="2">
    <source>
        <dbReference type="UniProtKB" id="P14743"/>
    </source>
</evidence>
<evidence type="ECO:0000256" key="3">
    <source>
        <dbReference type="SAM" id="MobiDB-lite"/>
    </source>
</evidence>
<evidence type="ECO:0000305" key="4"/>
<keyword id="KW-0012">Acyltransferase</keyword>
<keyword id="KW-0963">Cytoplasm</keyword>
<keyword id="KW-1185">Reference proteome</keyword>
<keyword id="KW-0808">Transferase</keyword>
<proteinExistence type="inferred from homology"/>
<comment type="function">
    <text evidence="1">Adds a myristoyl group to the N-terminal glycine residue of certain cellular proteins.</text>
</comment>
<comment type="catalytic activity">
    <reaction>
        <text>N-terminal glycyl-[protein] + tetradecanoyl-CoA = N-tetradecanoylglycyl-[protein] + CoA + H(+)</text>
        <dbReference type="Rhea" id="RHEA:15521"/>
        <dbReference type="Rhea" id="RHEA-COMP:12666"/>
        <dbReference type="Rhea" id="RHEA-COMP:12667"/>
        <dbReference type="ChEBI" id="CHEBI:15378"/>
        <dbReference type="ChEBI" id="CHEBI:57287"/>
        <dbReference type="ChEBI" id="CHEBI:57385"/>
        <dbReference type="ChEBI" id="CHEBI:64723"/>
        <dbReference type="ChEBI" id="CHEBI:133050"/>
        <dbReference type="EC" id="2.3.1.97"/>
    </reaction>
</comment>
<comment type="subunit">
    <text evidence="1">Monomer.</text>
</comment>
<comment type="subcellular location">
    <subcellularLocation>
        <location evidence="1">Cytoplasm</location>
    </subcellularLocation>
</comment>
<comment type="similarity">
    <text evidence="4">Belongs to the NMT family.</text>
</comment>